<accession>Q51702</accession>
<accession>A1B4Y2</accession>
<protein>
    <recommendedName>
        <fullName>Cytochrome c55X</fullName>
    </recommendedName>
</protein>
<dbReference type="EMBL" id="U05002">
    <property type="protein sequence ID" value="AAA93120.1"/>
    <property type="molecule type" value="Genomic_DNA"/>
</dbReference>
<dbReference type="EMBL" id="CP000489">
    <property type="protein sequence ID" value="ABL70576.1"/>
    <property type="molecule type" value="Genomic_DNA"/>
</dbReference>
<dbReference type="RefSeq" id="WP_011748769.1">
    <property type="nucleotide sequence ID" value="NC_008686.1"/>
</dbReference>
<dbReference type="SMR" id="Q51702"/>
<dbReference type="STRING" id="318586.Pden_2489"/>
<dbReference type="EnsemblBacteria" id="ABL70576">
    <property type="protein sequence ID" value="ABL70576"/>
    <property type="gene ID" value="Pden_2489"/>
</dbReference>
<dbReference type="GeneID" id="93450882"/>
<dbReference type="KEGG" id="pde:Pden_2489"/>
<dbReference type="eggNOG" id="COG2010">
    <property type="taxonomic scope" value="Bacteria"/>
</dbReference>
<dbReference type="HOGENOM" id="CLU_159748_0_0_5"/>
<dbReference type="OrthoDB" id="8689082at2"/>
<dbReference type="Proteomes" id="UP000000361">
    <property type="component" value="Chromosome 1"/>
</dbReference>
<dbReference type="GO" id="GO:0042597">
    <property type="term" value="C:periplasmic space"/>
    <property type="evidence" value="ECO:0007669"/>
    <property type="project" value="UniProtKB-SubCell"/>
</dbReference>
<dbReference type="GO" id="GO:0009055">
    <property type="term" value="F:electron transfer activity"/>
    <property type="evidence" value="ECO:0007669"/>
    <property type="project" value="InterPro"/>
</dbReference>
<dbReference type="GO" id="GO:0020037">
    <property type="term" value="F:heme binding"/>
    <property type="evidence" value="ECO:0007669"/>
    <property type="project" value="InterPro"/>
</dbReference>
<dbReference type="GO" id="GO:0046872">
    <property type="term" value="F:metal ion binding"/>
    <property type="evidence" value="ECO:0007669"/>
    <property type="project" value="UniProtKB-KW"/>
</dbReference>
<dbReference type="Gene3D" id="1.10.760.10">
    <property type="entry name" value="Cytochrome c-like domain"/>
    <property type="match status" value="1"/>
</dbReference>
<dbReference type="InterPro" id="IPR009056">
    <property type="entry name" value="Cyt_c-like_dom"/>
</dbReference>
<dbReference type="InterPro" id="IPR036909">
    <property type="entry name" value="Cyt_c-like_dom_sf"/>
</dbReference>
<dbReference type="Pfam" id="PF13442">
    <property type="entry name" value="Cytochrome_CBB3"/>
    <property type="match status" value="1"/>
</dbReference>
<dbReference type="SUPFAM" id="SSF46626">
    <property type="entry name" value="Cytochrome c"/>
    <property type="match status" value="1"/>
</dbReference>
<dbReference type="PROSITE" id="PS51007">
    <property type="entry name" value="CYTC"/>
    <property type="match status" value="1"/>
</dbReference>
<organism>
    <name type="scientific">Paracoccus denitrificans (strain Pd 1222)</name>
    <dbReference type="NCBI Taxonomy" id="318586"/>
    <lineage>
        <taxon>Bacteria</taxon>
        <taxon>Pseudomonadati</taxon>
        <taxon>Pseudomonadota</taxon>
        <taxon>Alphaproteobacteria</taxon>
        <taxon>Rhodobacterales</taxon>
        <taxon>Paracoccaceae</taxon>
        <taxon>Paracoccus</taxon>
    </lineage>
</organism>
<comment type="function">
    <text>Monoheme c-type cytochrome.</text>
</comment>
<comment type="subcellular location">
    <subcellularLocation>
        <location>Periplasm</location>
    </subcellularLocation>
</comment>
<comment type="PTM">
    <text>Binds 1 heme c group covalently per subunit.</text>
</comment>
<evidence type="ECO:0000255" key="1"/>
<evidence type="ECO:0000255" key="2">
    <source>
        <dbReference type="PROSITE-ProRule" id="PRU00433"/>
    </source>
</evidence>
<reference key="1">
    <citation type="journal article" date="1994" name="Antonie Van Leeuwenhoek">
        <title>Isolation, sequencing and mutational analysis of a gene cluster involved in nitrite reduction in Paracoccus denitrificans.</title>
        <authorList>
            <person name="de Boer A.P.N."/>
            <person name="Reijnders W.N.M."/>
            <person name="Kuenen J.G."/>
            <person name="Stouthamer A.H."/>
            <person name="van Spanning R.J.M."/>
        </authorList>
    </citation>
    <scope>NUCLEOTIDE SEQUENCE [GENOMIC DNA]</scope>
</reference>
<reference key="2">
    <citation type="submission" date="2006-12" db="EMBL/GenBank/DDBJ databases">
        <title>Complete sequence of chromosome 1 of Paracoccus denitrificans PD1222.</title>
        <authorList>
            <person name="Copeland A."/>
            <person name="Lucas S."/>
            <person name="Lapidus A."/>
            <person name="Barry K."/>
            <person name="Detter J.C."/>
            <person name="Glavina del Rio T."/>
            <person name="Hammon N."/>
            <person name="Israni S."/>
            <person name="Dalin E."/>
            <person name="Tice H."/>
            <person name="Pitluck S."/>
            <person name="Munk A.C."/>
            <person name="Brettin T."/>
            <person name="Bruce D."/>
            <person name="Han C."/>
            <person name="Tapia R."/>
            <person name="Gilna P."/>
            <person name="Schmutz J."/>
            <person name="Larimer F."/>
            <person name="Land M."/>
            <person name="Hauser L."/>
            <person name="Kyrpides N."/>
            <person name="Lykidis A."/>
            <person name="Spiro S."/>
            <person name="Richardson D.J."/>
            <person name="Moir J.W.B."/>
            <person name="Ferguson S.J."/>
            <person name="van Spanning R.J.M."/>
            <person name="Richardson P."/>
        </authorList>
    </citation>
    <scope>NUCLEOTIDE SEQUENCE [LARGE SCALE GENOMIC DNA]</scope>
    <source>
        <strain>Pd 1222</strain>
    </source>
</reference>
<gene>
    <name type="primary">nirC</name>
    <name type="ordered locus">Pden_2489</name>
</gene>
<feature type="signal peptide" evidence="1">
    <location>
        <begin position="1"/>
        <end position="17"/>
    </location>
</feature>
<feature type="chain" id="PRO_0000006571" description="Cytochrome c55X">
    <location>
        <begin position="18"/>
        <end position="103"/>
    </location>
</feature>
<feature type="binding site" description="covalent" evidence="2">
    <location>
        <position position="36"/>
    </location>
    <ligand>
        <name>heme c</name>
        <dbReference type="ChEBI" id="CHEBI:61717"/>
    </ligand>
</feature>
<feature type="binding site" description="covalent" evidence="2">
    <location>
        <position position="39"/>
    </location>
    <ligand>
        <name>heme c</name>
        <dbReference type="ChEBI" id="CHEBI:61717"/>
    </ligand>
</feature>
<feature type="binding site" description="axial binding residue" evidence="2">
    <location>
        <position position="40"/>
    </location>
    <ligand>
        <name>heme c</name>
        <dbReference type="ChEBI" id="CHEBI:61717"/>
    </ligand>
    <ligandPart>
        <name>Fe</name>
        <dbReference type="ChEBI" id="CHEBI:18248"/>
    </ligandPart>
</feature>
<sequence>MARLALLLVLLAGTAVAGPPDAARQDELRHLVRQDCGSCHGLRMTGGLGRPITAAALAGRDVEDLSDVILDGMPGTAMPGWRPLLTEDDARWIADYLLKTETE</sequence>
<name>NIRC_PARDP</name>
<proteinExistence type="inferred from homology"/>
<keyword id="KW-0249">Electron transport</keyword>
<keyword id="KW-0349">Heme</keyword>
<keyword id="KW-0408">Iron</keyword>
<keyword id="KW-0479">Metal-binding</keyword>
<keyword id="KW-0574">Periplasm</keyword>
<keyword id="KW-1185">Reference proteome</keyword>
<keyword id="KW-0732">Signal</keyword>
<keyword id="KW-0813">Transport</keyword>